<proteinExistence type="inferred from homology"/>
<gene>
    <name evidence="1" type="primary">RPS1</name>
    <name type="ORF">PAAG_08955</name>
</gene>
<feature type="initiator methionine" description="Removed" evidence="1">
    <location>
        <position position="1"/>
    </location>
</feature>
<feature type="chain" id="PRO_0000389391" description="Small ribosomal subunit protein eS1">
    <location>
        <begin position="2"/>
        <end position="255"/>
    </location>
</feature>
<feature type="region of interest" description="Disordered" evidence="2">
    <location>
        <begin position="1"/>
        <end position="28"/>
    </location>
</feature>
<feature type="compositionally biased region" description="Basic residues" evidence="2">
    <location>
        <begin position="1"/>
        <end position="18"/>
    </location>
</feature>
<feature type="compositionally biased region" description="Basic and acidic residues" evidence="2">
    <location>
        <begin position="19"/>
        <end position="28"/>
    </location>
</feature>
<feature type="modified residue" description="N-acetylalanine; partial" evidence="1">
    <location>
        <position position="2"/>
    </location>
</feature>
<keyword id="KW-0007">Acetylation</keyword>
<keyword id="KW-0963">Cytoplasm</keyword>
<keyword id="KW-1185">Reference proteome</keyword>
<keyword id="KW-0687">Ribonucleoprotein</keyword>
<keyword id="KW-0689">Ribosomal protein</keyword>
<organism>
    <name type="scientific">Paracoccidioides lutzii (strain ATCC MYA-826 / Pb01)</name>
    <name type="common">Paracoccidioides brasiliensis</name>
    <dbReference type="NCBI Taxonomy" id="502779"/>
    <lineage>
        <taxon>Eukaryota</taxon>
        <taxon>Fungi</taxon>
        <taxon>Dikarya</taxon>
        <taxon>Ascomycota</taxon>
        <taxon>Pezizomycotina</taxon>
        <taxon>Eurotiomycetes</taxon>
        <taxon>Eurotiomycetidae</taxon>
        <taxon>Onygenales</taxon>
        <taxon>Ajellomycetaceae</taxon>
        <taxon>Paracoccidioides</taxon>
    </lineage>
</organism>
<protein>
    <recommendedName>
        <fullName evidence="1">Small ribosomal subunit protein eS1</fullName>
    </recommendedName>
    <alternativeName>
        <fullName evidence="3">40S ribosomal protein S1</fullName>
    </alternativeName>
</protein>
<sequence length="255" mass="28973">MAVGKNKRLSKGKKGLKKRTQDPFSRKDEYSVKAPSTFAIRDVGKTLVNRTTGLKNANDALKGRIFEVSLADLQNDEDHAFRKVKLRVDEVQGKNCLTNFHGLDFTSDKLRSLVRKWQTLIEANVTVKTTDDYLLRLFAIAFTKRRPNQIKKTTYAQSSQIRAIRKKMVEIIQREAGTRSLAQLTKLIPEVIGREIEKATHGIYPLQNVHIRKVKLLKSPKFDLGALLALHGESSTDDKGQKVEREFKETVLESV</sequence>
<dbReference type="EMBL" id="KN294047">
    <property type="protein sequence ID" value="EEH40106.2"/>
    <property type="status" value="ALT_SEQ"/>
    <property type="molecule type" value="Genomic_DNA"/>
</dbReference>
<dbReference type="RefSeq" id="XP_015701600.1">
    <property type="nucleotide sequence ID" value="XM_015846679.1"/>
</dbReference>
<dbReference type="SMR" id="C1HDW2"/>
<dbReference type="STRING" id="502779.C1HDW2"/>
<dbReference type="GeneID" id="9092348"/>
<dbReference type="KEGG" id="pbl:PAAG_08955"/>
<dbReference type="eggNOG" id="KOG1628">
    <property type="taxonomic scope" value="Eukaryota"/>
</dbReference>
<dbReference type="HOGENOM" id="CLU_062507_0_0_1"/>
<dbReference type="OrthoDB" id="9834376at2759"/>
<dbReference type="Proteomes" id="UP000002059">
    <property type="component" value="Partially assembled WGS sequence"/>
</dbReference>
<dbReference type="GO" id="GO:0022627">
    <property type="term" value="C:cytosolic small ribosomal subunit"/>
    <property type="evidence" value="ECO:0007669"/>
    <property type="project" value="UniProtKB-UniRule"/>
</dbReference>
<dbReference type="GO" id="GO:0003735">
    <property type="term" value="F:structural constituent of ribosome"/>
    <property type="evidence" value="ECO:0007669"/>
    <property type="project" value="UniProtKB-UniRule"/>
</dbReference>
<dbReference type="GO" id="GO:0006412">
    <property type="term" value="P:translation"/>
    <property type="evidence" value="ECO:0007669"/>
    <property type="project" value="UniProtKB-UniRule"/>
</dbReference>
<dbReference type="HAMAP" id="MF_03122">
    <property type="entry name" value="Ribosomal_eS1_euk"/>
    <property type="match status" value="1"/>
</dbReference>
<dbReference type="InterPro" id="IPR001593">
    <property type="entry name" value="Ribosomal_eS1"/>
</dbReference>
<dbReference type="InterPro" id="IPR018281">
    <property type="entry name" value="Ribosomal_eS1_CS"/>
</dbReference>
<dbReference type="InterPro" id="IPR027500">
    <property type="entry name" value="Ribosomal_eS1_euk"/>
</dbReference>
<dbReference type="PANTHER" id="PTHR11830">
    <property type="entry name" value="40S RIBOSOMAL PROTEIN S3A"/>
    <property type="match status" value="1"/>
</dbReference>
<dbReference type="Pfam" id="PF01015">
    <property type="entry name" value="Ribosomal_S3Ae"/>
    <property type="match status" value="1"/>
</dbReference>
<dbReference type="SMART" id="SM01397">
    <property type="entry name" value="Ribosomal_S3Ae"/>
    <property type="match status" value="1"/>
</dbReference>
<dbReference type="PROSITE" id="PS01191">
    <property type="entry name" value="RIBOSOMAL_S3AE"/>
    <property type="match status" value="1"/>
</dbReference>
<evidence type="ECO:0000255" key="1">
    <source>
        <dbReference type="HAMAP-Rule" id="MF_03122"/>
    </source>
</evidence>
<evidence type="ECO:0000256" key="2">
    <source>
        <dbReference type="SAM" id="MobiDB-lite"/>
    </source>
</evidence>
<evidence type="ECO:0000305" key="3"/>
<reference key="1">
    <citation type="journal article" date="2011" name="PLoS Genet.">
        <title>Comparative genomic analysis of human fungal pathogens causing paracoccidioidomycosis.</title>
        <authorList>
            <person name="Desjardins C.A."/>
            <person name="Champion M.D."/>
            <person name="Holder J.W."/>
            <person name="Muszewska A."/>
            <person name="Goldberg J."/>
            <person name="Bailao A.M."/>
            <person name="Brigido M.M."/>
            <person name="Ferreira M.E."/>
            <person name="Garcia A.M."/>
            <person name="Grynberg M."/>
            <person name="Gujja S."/>
            <person name="Heiman D.I."/>
            <person name="Henn M.R."/>
            <person name="Kodira C.D."/>
            <person name="Leon-Narvaez H."/>
            <person name="Longo L.V.G."/>
            <person name="Ma L.-J."/>
            <person name="Malavazi I."/>
            <person name="Matsuo A.L."/>
            <person name="Morais F.V."/>
            <person name="Pereira M."/>
            <person name="Rodriguez-Brito S."/>
            <person name="Sakthikumar S."/>
            <person name="Salem-Izacc S.M."/>
            <person name="Sykes S.M."/>
            <person name="Teixeira M.M."/>
            <person name="Vallejo M.C."/>
            <person name="Walter M.E."/>
            <person name="Yandava C."/>
            <person name="Young S."/>
            <person name="Zeng Q."/>
            <person name="Zucker J."/>
            <person name="Felipe M.S."/>
            <person name="Goldman G.H."/>
            <person name="Haas B.J."/>
            <person name="McEwen J.G."/>
            <person name="Nino-Vega G."/>
            <person name="Puccia R."/>
            <person name="San-Blas G."/>
            <person name="Soares C.M."/>
            <person name="Birren B.W."/>
            <person name="Cuomo C.A."/>
        </authorList>
    </citation>
    <scope>NUCLEOTIDE SEQUENCE [LARGE SCALE GENOMIC DNA]</scope>
    <source>
        <strain>ATCC MYA-826 / Pb01</strain>
    </source>
</reference>
<name>RS3A_PARBA</name>
<accession>C1HDW2</accession>
<comment type="subunit">
    <text evidence="1">Component of the small ribosomal subunit. Mature ribosomes consist of a small (40S) and a large (60S) subunit. The 40S subunit contains about 33 different proteins and 1 molecule of RNA (18S). The 60S subunit contains about 49 different proteins and 3 molecules of RNA (25S, 5.8S and 5S).</text>
</comment>
<comment type="subcellular location">
    <subcellularLocation>
        <location evidence="1">Cytoplasm</location>
    </subcellularLocation>
</comment>
<comment type="similarity">
    <text evidence="1">Belongs to the eukaryotic ribosomal protein eS1 family.</text>
</comment>
<comment type="sequence caution" evidence="3">
    <conflict type="erroneous gene model prediction">
        <sequence resource="EMBL-CDS" id="EEH40106"/>
    </conflict>
</comment>